<organism>
    <name type="scientific">Mus musculus</name>
    <name type="common">Mouse</name>
    <dbReference type="NCBI Taxonomy" id="10090"/>
    <lineage>
        <taxon>Eukaryota</taxon>
        <taxon>Metazoa</taxon>
        <taxon>Chordata</taxon>
        <taxon>Craniata</taxon>
        <taxon>Vertebrata</taxon>
        <taxon>Euteleostomi</taxon>
        <taxon>Mammalia</taxon>
        <taxon>Eutheria</taxon>
        <taxon>Euarchontoglires</taxon>
        <taxon>Glires</taxon>
        <taxon>Rodentia</taxon>
        <taxon>Myomorpha</taxon>
        <taxon>Muroidea</taxon>
        <taxon>Muridae</taxon>
        <taxon>Murinae</taxon>
        <taxon>Mus</taxon>
        <taxon>Mus</taxon>
    </lineage>
</organism>
<evidence type="ECO:0000269" key="1">
    <source>
    </source>
</evidence>
<evidence type="ECO:0000303" key="2">
    <source>
    </source>
</evidence>
<evidence type="ECO:0000305" key="3"/>
<evidence type="ECO:0000312" key="4">
    <source>
        <dbReference type="MGI" id="MGI:1921905"/>
    </source>
</evidence>
<reference key="1">
    <citation type="journal article" date="2016" name="FASEB J.">
        <title>A novel germ cell protein, SPIF (sperm PKA interacting factor), is essential for the formation of a PKA/TCP11 complex that undergoes conformational and phosphorylation changes upon capacitation.</title>
        <authorList>
            <person name="Stanger S.J."/>
            <person name="Law E.A."/>
            <person name="Jamsai D."/>
            <person name="O'Bryan M.K."/>
            <person name="Nixon B."/>
            <person name="McLaughlin E.A."/>
            <person name="Aitken R.J."/>
            <person name="Roman S.D."/>
        </authorList>
    </citation>
    <scope>NUCLEOTIDE SEQUENCE [MRNA] (ISOFORMS 2 AND 3)</scope>
    <scope>IDENTIFICATION IN A COMPLEX WITH MROH2B; PRKACA AND TCP11</scope>
    <scope>INTERACTION WITH PRKACA AND TCP11</scope>
    <scope>SUBCELLULAR LOCATION</scope>
    <scope>POSSIBLE FUNCTION</scope>
    <scope>DISRUPTION PHENOTYPE</scope>
    <scope>TISSUE SPECIFICITY</scope>
</reference>
<reference key="2">
    <citation type="journal article" date="2009" name="PLoS Biol.">
        <title>Lineage-specific biology revealed by a finished genome assembly of the mouse.</title>
        <authorList>
            <person name="Church D.M."/>
            <person name="Goodstadt L."/>
            <person name="Hillier L.W."/>
            <person name="Zody M.C."/>
            <person name="Goldstein S."/>
            <person name="She X."/>
            <person name="Bult C.J."/>
            <person name="Agarwala R."/>
            <person name="Cherry J.L."/>
            <person name="DiCuccio M."/>
            <person name="Hlavina W."/>
            <person name="Kapustin Y."/>
            <person name="Meric P."/>
            <person name="Maglott D."/>
            <person name="Birtle Z."/>
            <person name="Marques A.C."/>
            <person name="Graves T."/>
            <person name="Zhou S."/>
            <person name="Teague B."/>
            <person name="Potamousis K."/>
            <person name="Churas C."/>
            <person name="Place M."/>
            <person name="Herschleb J."/>
            <person name="Runnheim R."/>
            <person name="Forrest D."/>
            <person name="Amos-Landgraf J."/>
            <person name="Schwartz D.C."/>
            <person name="Cheng Z."/>
            <person name="Lindblad-Toh K."/>
            <person name="Eichler E.E."/>
            <person name="Ponting C.P."/>
        </authorList>
    </citation>
    <scope>NUCLEOTIDE SEQUENCE [LARGE SCALE GENOMIC DNA]</scope>
    <source>
        <strain>C57BL/6J</strain>
    </source>
</reference>
<reference key="3">
    <citation type="journal article" date="2003" name="BMC Genomics">
        <title>Gene discovery in the hamster: a comparative genomics approach for gene annotation by sequencing of hamster testis cDNAs.</title>
        <authorList>
            <person name="Oduru S."/>
            <person name="Campbell J.L."/>
            <person name="Karri S."/>
            <person name="Hendry W.J."/>
            <person name="Khan S.A."/>
            <person name="Williams S.C."/>
        </authorList>
    </citation>
    <scope>NUCLEOTIDE SEQUENCE [MRNA] OF 959-1581 (ISOFORMS 1/2)</scope>
    <source>
        <strain>C57BL/6J</strain>
    </source>
</reference>
<name>MRO2B_MOUSE</name>
<accession>Q7M6Y6</accession>
<accession>A0A096XFP7</accession>
<accession>A0A096XFP8</accession>
<protein>
    <recommendedName>
        <fullName evidence="4">Maestro heat-like repeat-containing protein family member 2B</fullName>
    </recommendedName>
    <alternativeName>
        <fullName>HEAT repeat-containing protein 7B2</fullName>
    </alternativeName>
    <alternativeName>
        <fullName evidence="2">Sperm PKA-interacting factor</fullName>
        <shortName evidence="2">SPIF</shortName>
    </alternativeName>
</protein>
<gene>
    <name evidence="4" type="primary">Mroh2b</name>
    <name type="synonym">Heatr7b2</name>
</gene>
<feature type="chain" id="PRO_0000395105" description="Maestro heat-like repeat-containing protein family member 2B">
    <location>
        <begin position="1"/>
        <end position="1581"/>
    </location>
</feature>
<feature type="repeat" description="HEAT 1">
    <location>
        <begin position="123"/>
        <end position="160"/>
    </location>
</feature>
<feature type="repeat" description="HEAT 2">
    <location>
        <begin position="305"/>
        <end position="342"/>
    </location>
</feature>
<feature type="repeat" description="HEAT 3">
    <location>
        <begin position="401"/>
        <end position="441"/>
    </location>
</feature>
<feature type="repeat" description="HEAT 4">
    <location>
        <begin position="464"/>
        <end position="501"/>
    </location>
</feature>
<feature type="repeat" description="HEAT 5">
    <location>
        <begin position="526"/>
        <end position="543"/>
    </location>
</feature>
<feature type="repeat" description="HEAT 6">
    <location>
        <begin position="544"/>
        <end position="580"/>
    </location>
</feature>
<feature type="repeat" description="HEAT 7">
    <location>
        <begin position="658"/>
        <end position="695"/>
    </location>
</feature>
<feature type="repeat" description="HEAT 8">
    <location>
        <begin position="773"/>
        <end position="815"/>
    </location>
</feature>
<feature type="repeat" description="HEAT 9">
    <location>
        <begin position="960"/>
        <end position="997"/>
    </location>
</feature>
<feature type="repeat" description="HEAT 10">
    <location>
        <begin position="1017"/>
        <end position="1055"/>
    </location>
</feature>
<feature type="repeat" description="HEAT 11">
    <location>
        <begin position="1112"/>
        <end position="1150"/>
    </location>
</feature>
<feature type="repeat" description="HEAT 12">
    <location>
        <begin position="1153"/>
        <end position="1191"/>
    </location>
</feature>
<feature type="repeat" description="HEAT 13">
    <location>
        <begin position="1254"/>
        <end position="1291"/>
    </location>
</feature>
<feature type="repeat" description="HEAT 14">
    <location>
        <begin position="1295"/>
        <end position="1332"/>
    </location>
</feature>
<feature type="repeat" description="HEAT 15">
    <location>
        <begin position="1359"/>
        <end position="1379"/>
    </location>
</feature>
<feature type="repeat" description="HEAT 16">
    <location>
        <begin position="1380"/>
        <end position="1416"/>
    </location>
</feature>
<feature type="splice variant" id="VSP_058721" description="In isoform 3.">
    <original>MEEYGDMFGDINLTIGMLSKEDNISKEDIYCHLTSFIQNTDIMDDAIVQRLIYYTSKDMRDEEIPRELRMLAGEVLVSLAAHDFNSVMYEVQSNFRILELPNEFVVLALAELATSYVSQSIPFMMMTLLTMQTMLRLVEDENMRQTFCIALENFSKSIYKYVNHWKDFPYPKLDANRLSDKIFMLFRYIMEKWAPQASPMHALAIIKAHGPTVSLLLHREDFCEFALSQISWLLLQYRDKENDFYITQSLKQILTAAVLYDIALPKNLRRSVLSSLLHQICKVPEPPIKENKLEASSCFLILAHANPVDLLDFFDEQIRSTNEAVRTGILTLLRSTINAEEPKFRNHTTSIEKTVKLVMGDLSVKVRKSTLLLIQTMCEKGYIEAREGWPLIDYIFSQFAMSNRNLENPIKSNSQEDENGEKSVQETSLEVLKSLDPLVIGMPQVLWPRILTYVVPKEYTGTLDYLFNIIRILIMAEEKKKRDIQESTALVVSTGAVKLPSPQQLLARLLVISILASLGQLCGAGAIGLLKIMPEIIHPKLAEMWKTRMPALLQPLEGSNASIVLWETMLLQLLKESLWKISDVAWTSQLSRDFSLQMGSYSNSSMEKKFLWKALGTTLASCQDKDFVSSQINEFLVTPSLLGDHRQGTTSILGFCAENHLDIVLNVLKTFQDKEKFFVNRCKGIFSGKKSLTKTDLILIYGAVALHAPKQQLLARLDQDIMGQILLLYGQCCQILGVSVINK</original>
    <variation>MAHAKSIPNASVPQEQIQTLQHKLDYGSDCSFHFIALPTIYSGNIITFLPAKCRAFFEPKNPSLPFLLLLFVFYLP</variation>
    <location>
        <begin position="1"/>
        <end position="743"/>
    </location>
</feature>
<feature type="splice variant" id="VSP_058722" description="In isoform 2.">
    <location>
        <begin position="739"/>
        <end position="743"/>
    </location>
</feature>
<feature type="sequence conflict" description="In Ref. 1; AHK25002." evidence="3" ref="1">
    <original>M</original>
    <variation>V</variation>
    <location>
        <position position="401"/>
    </location>
</feature>
<feature type="sequence conflict" description="In Ref. 1; AHK25002." evidence="3" ref="1">
    <original>N</original>
    <variation>S</variation>
    <location>
        <position position="659"/>
    </location>
</feature>
<sequence>MEEYGDMFGDINLTIGMLSKEDNISKEDIYCHLTSFIQNTDIMDDAIVQRLIYYTSKDMRDEEIPRELRMLAGEVLVSLAAHDFNSVMYEVQSNFRILELPNEFVVLALAELATSYVSQSIPFMMMTLLTMQTMLRLVEDENMRQTFCIALENFSKSIYKYVNHWKDFPYPKLDANRLSDKIFMLFRYIMEKWAPQASPMHALAIIKAHGPTVSLLLHREDFCEFALSQISWLLLQYRDKENDFYITQSLKQILTAAVLYDIALPKNLRRSVLSSLLHQICKVPEPPIKENKLEASSCFLILAHANPVDLLDFFDEQIRSTNEAVRTGILTLLRSTINAEEPKFRNHTTSIEKTVKLVMGDLSVKVRKSTLLLIQTMCEKGYIEAREGWPLIDYIFSQFAMSNRNLENPIKSNSQEDENGEKSVQETSLEVLKSLDPLVIGMPQVLWPRILTYVVPKEYTGTLDYLFNIIRILIMAEEKKKRDIQESTALVVSTGAVKLPSPQQLLARLLVISILASLGQLCGAGAIGLLKIMPEIIHPKLAEMWKTRMPALLQPLEGSNASIVLWETMLLQLLKESLWKISDVAWTSQLSRDFSLQMGSYSNSSMEKKFLWKALGTTLASCQDKDFVSSQINEFLVTPSLLGDHRQGTTSILGFCAENHLDIVLNVLKTFQDKEKFFVNRCKGIFSGKKSLTKTDLILIYGAVALHAPKQQLLARLDQDIMGQILLLYGQCCQILGVSVINKDMDLQMSFTRSITEVGIAVQDAEDQKFQFTYKEMLIGSMLDLIKDEPLNTLASPVRWKVLIAIRYLSKLKPALSLNDHLNILEENIRRLLPLPPLEKLKSQGETDKDRERIEFLYERSMDALGKLLRSMIWDNTDAQNCEEMFNLLRMWLVSQKQWERERAFQVTSKVLTKDVEAPQNFRIGSLLGLLAPHSCDTLPTIRQAATSSTIGLLCAKGICQEVDRLQGLQEGLDSEDEQVQIKISSKIAKIVCKFIPSEEIQVFLEETLDGLETLDPLCTKACGIWMIAALKEHGALLEDQLLEILSTIYHHMPVLRQKEESFQFMLEAISQIASFHMDAVVNNLLQKPLPFDRDTKTLWKALAENPASSGKLMRALIKKLVARLEDDIAGTEAISVACAIYEVILTGAHITHLYPELFTLLLKLVSCSLGQKMPMSTLSQRRRVMQLGERQRFPDPCRLSTATLKCLQAQAMREGLAKESDEGDNLWTLLSNPDTHHIGVCALARSMAVWQHGVILDIMEHLLSSLTSSSENYRITGMAFFSELMKEPILWKHGNLRDVLIFMDQNARDSNAILRQMAIRGLGNTACGAPHKVRKYKQMMLECIIRGLYHLARTEVVCESLKALKKILELLTERDINFYFKEIVLQTRTFFEDEQDDVRLTAISLFEDLATLTGRRWKIFFAEEVKKSMISFLLHLWDPNPKIGAACRDVLVICIPFLGLQELYGLLDHLLERDLPRARDFYRQLCMKLSKKNQEILWILHTHSFTFFTSSWEMIRSAAVKLTDAIILHLTKRYVELLDREQLTMRLQALRQDPCISVQRAAEATLQTLLRRCKEISIPL</sequence>
<dbReference type="EMBL" id="KF778378">
    <property type="protein sequence ID" value="AHK25002.1"/>
    <property type="molecule type" value="mRNA"/>
</dbReference>
<dbReference type="EMBL" id="KF778379">
    <property type="protein sequence ID" value="AHK25003.1"/>
    <property type="molecule type" value="mRNA"/>
</dbReference>
<dbReference type="EMBL" id="AC115877">
    <property type="status" value="NOT_ANNOTATED_CDS"/>
    <property type="molecule type" value="Genomic_DNA"/>
</dbReference>
<dbReference type="EMBL" id="AC117588">
    <property type="status" value="NOT_ANNOTATED_CDS"/>
    <property type="molecule type" value="Genomic_DNA"/>
</dbReference>
<dbReference type="EMBL" id="BK001331">
    <property type="protein sequence ID" value="DAA01465.1"/>
    <property type="status" value="ALT_INIT"/>
    <property type="molecule type" value="mRNA"/>
</dbReference>
<dbReference type="CCDS" id="CCDS49572.1">
    <molecule id="Q7M6Y6-1"/>
</dbReference>
<dbReference type="RefSeq" id="NP_001159538.1">
    <molecule id="Q7M6Y6-1"/>
    <property type="nucleotide sequence ID" value="NM_001166066.1"/>
</dbReference>
<dbReference type="RefSeq" id="XP_030104374.1">
    <molecule id="Q7M6Y6-1"/>
    <property type="nucleotide sequence ID" value="XM_030248514.1"/>
</dbReference>
<dbReference type="FunCoup" id="Q7M6Y6">
    <property type="interactions" value="21"/>
</dbReference>
<dbReference type="IntAct" id="Q7M6Y6">
    <property type="interactions" value="1"/>
</dbReference>
<dbReference type="MINT" id="Q7M6Y6"/>
<dbReference type="STRING" id="10090.ENSMUSP00000036148"/>
<dbReference type="GlyGen" id="Q7M6Y6">
    <property type="glycosylation" value="1 site, 1 O-linked glycan (1 site)"/>
</dbReference>
<dbReference type="iPTMnet" id="Q7M6Y6"/>
<dbReference type="PhosphoSitePlus" id="Q7M6Y6"/>
<dbReference type="jPOST" id="Q7M6Y6"/>
<dbReference type="PaxDb" id="10090-ENSMUSP00000036148"/>
<dbReference type="ProteomicsDB" id="290320">
    <molecule id="Q7M6Y6-1"/>
</dbReference>
<dbReference type="ProteomicsDB" id="290321">
    <molecule id="Q7M6Y6-2"/>
</dbReference>
<dbReference type="ProteomicsDB" id="290322">
    <molecule id="Q7M6Y6-3"/>
</dbReference>
<dbReference type="Antibodypedia" id="56251">
    <property type="antibodies" value="17 antibodies from 5 providers"/>
</dbReference>
<dbReference type="Ensembl" id="ENSMUST00000045736.9">
    <molecule id="Q7M6Y6-1"/>
    <property type="protein sequence ID" value="ENSMUSP00000036148.8"/>
    <property type="gene ID" value="ENSMUSG00000022155.10"/>
</dbReference>
<dbReference type="GeneID" id="223825"/>
<dbReference type="KEGG" id="mmu:223825"/>
<dbReference type="UCSC" id="uc011zqx.1">
    <molecule id="Q7M6Y6-1"/>
    <property type="organism name" value="mouse"/>
</dbReference>
<dbReference type="AGR" id="MGI:1921905"/>
<dbReference type="CTD" id="133558"/>
<dbReference type="MGI" id="MGI:1921905">
    <property type="gene designation" value="Mroh2b"/>
</dbReference>
<dbReference type="VEuPathDB" id="HostDB:ENSMUSG00000022155"/>
<dbReference type="eggNOG" id="KOG2032">
    <property type="taxonomic scope" value="Eukaryota"/>
</dbReference>
<dbReference type="GeneTree" id="ENSGT00940000161231"/>
<dbReference type="HOGENOM" id="CLU_003168_1_0_1"/>
<dbReference type="InParanoid" id="Q7M6Y6"/>
<dbReference type="OMA" id="HREDFCE"/>
<dbReference type="OrthoDB" id="1884734at2759"/>
<dbReference type="PhylomeDB" id="Q7M6Y6"/>
<dbReference type="TreeFam" id="TF315201"/>
<dbReference type="BioGRID-ORCS" id="223825">
    <property type="hits" value="1 hit in 76 CRISPR screens"/>
</dbReference>
<dbReference type="ChiTaRS" id="Mroh2b">
    <property type="organism name" value="mouse"/>
</dbReference>
<dbReference type="PRO" id="PR:Q7M6Y6"/>
<dbReference type="Proteomes" id="UP000000589">
    <property type="component" value="Chromosome 15"/>
</dbReference>
<dbReference type="RNAct" id="Q7M6Y6">
    <property type="molecule type" value="protein"/>
</dbReference>
<dbReference type="Bgee" id="ENSMUSG00000022155">
    <property type="expression patterns" value="Expressed in spermatocyte and 9 other cell types or tissues"/>
</dbReference>
<dbReference type="GO" id="GO:0001669">
    <property type="term" value="C:acrosomal vesicle"/>
    <property type="evidence" value="ECO:0000314"/>
    <property type="project" value="UniProtKB"/>
</dbReference>
<dbReference type="GO" id="GO:0005737">
    <property type="term" value="C:cytoplasm"/>
    <property type="evidence" value="ECO:0000314"/>
    <property type="project" value="UniProtKB"/>
</dbReference>
<dbReference type="GO" id="GO:0036126">
    <property type="term" value="C:sperm flagellum"/>
    <property type="evidence" value="ECO:0000314"/>
    <property type="project" value="UniProtKB"/>
</dbReference>
<dbReference type="GO" id="GO:0097225">
    <property type="term" value="C:sperm midpiece"/>
    <property type="evidence" value="ECO:0000314"/>
    <property type="project" value="UniProtKB"/>
</dbReference>
<dbReference type="GO" id="GO:0030154">
    <property type="term" value="P:cell differentiation"/>
    <property type="evidence" value="ECO:0007669"/>
    <property type="project" value="UniProtKB-KW"/>
</dbReference>
<dbReference type="GO" id="GO:0010737">
    <property type="term" value="P:protein kinase A signaling"/>
    <property type="evidence" value="ECO:0000314"/>
    <property type="project" value="UniProtKB"/>
</dbReference>
<dbReference type="GO" id="GO:0007283">
    <property type="term" value="P:spermatogenesis"/>
    <property type="evidence" value="ECO:0007669"/>
    <property type="project" value="UniProtKB-KW"/>
</dbReference>
<dbReference type="Gene3D" id="1.25.10.10">
    <property type="entry name" value="Leucine-rich Repeat Variant"/>
    <property type="match status" value="2"/>
</dbReference>
<dbReference type="InterPro" id="IPR011989">
    <property type="entry name" value="ARM-like"/>
</dbReference>
<dbReference type="InterPro" id="IPR016024">
    <property type="entry name" value="ARM-type_fold"/>
</dbReference>
<dbReference type="InterPro" id="IPR055406">
    <property type="entry name" value="HEAT_Maestro"/>
</dbReference>
<dbReference type="InterPro" id="IPR055408">
    <property type="entry name" value="HEAT_MROH2B-like"/>
</dbReference>
<dbReference type="InterPro" id="IPR048465">
    <property type="entry name" value="Maestro-like_HEAT"/>
</dbReference>
<dbReference type="InterPro" id="IPR045206">
    <property type="entry name" value="Maestro_heat-like_prot"/>
</dbReference>
<dbReference type="InterPro" id="IPR056282">
    <property type="entry name" value="MROH2B-like_N_HEAT"/>
</dbReference>
<dbReference type="PANTHER" id="PTHR23120:SF22">
    <property type="entry name" value="MAESTRO HEAT-LIKE REPEAT-CONTAINING PROTEIN FAMILY MEMBER 2B"/>
    <property type="match status" value="1"/>
</dbReference>
<dbReference type="PANTHER" id="PTHR23120">
    <property type="entry name" value="MAESTRO-RELATED HEAT DOMAIN-CONTAINING"/>
    <property type="match status" value="1"/>
</dbReference>
<dbReference type="Pfam" id="PF21047">
    <property type="entry name" value="HEAT_Maestro"/>
    <property type="match status" value="1"/>
</dbReference>
<dbReference type="Pfam" id="PF23210">
    <property type="entry name" value="HEAT_Maestro_2"/>
    <property type="match status" value="1"/>
</dbReference>
<dbReference type="Pfam" id="PF23221">
    <property type="entry name" value="HEAT_MROH2B_1st"/>
    <property type="match status" value="1"/>
</dbReference>
<dbReference type="Pfam" id="PF23227">
    <property type="entry name" value="HEAT_MROH2B_C"/>
    <property type="match status" value="1"/>
</dbReference>
<dbReference type="SUPFAM" id="SSF48371">
    <property type="entry name" value="ARM repeat"/>
    <property type="match status" value="2"/>
</dbReference>
<proteinExistence type="evidence at protein level"/>
<comment type="function">
    <text evidence="1">May play a role in the process of sperm capacitation (PubMed:27105888).</text>
</comment>
<comment type="subunit">
    <text evidence="1">Found in a complex at least composed of MROH2B isoform 2, PRKACA isoform 2 and TCP11 (PubMed:27105888). Interacts with PRKACA isoform 2 (PubMed:27105888). Interacts with TCP11 (PubMed:27105888).</text>
</comment>
<comment type="subcellular location">
    <subcellularLocation>
        <location evidence="1">Cytoplasm</location>
    </subcellularLocation>
    <subcellularLocation>
        <location evidence="1">Cytoplasmic vesicle</location>
        <location evidence="1">Secretory vesicle</location>
        <location evidence="1">Acrosome</location>
    </subcellularLocation>
    <subcellularLocation>
        <location evidence="1">Cell projection</location>
        <location evidence="1">Cilium</location>
        <location evidence="1">Flagellum</location>
    </subcellularLocation>
    <text evidence="1">Colocalizes with PRKACA and TCP11 on the acrosome and tail regions in round spermatids and spermatozoa regardless of the capacitation status of the sperm.</text>
</comment>
<comment type="alternative products">
    <event type="alternative splicing"/>
    <isoform>
        <id>Q7M6Y6-1</id>
        <name>1</name>
        <sequence type="displayed"/>
    </isoform>
    <isoform>
        <id>Q7M6Y6-2</id>
        <name>2</name>
        <name evidence="2">SPIF-L</name>
        <sequence type="described" ref="VSP_058722"/>
    </isoform>
    <isoform>
        <id>Q7M6Y6-3</id>
        <name>3</name>
        <name evidence="2">SPIF-S</name>
        <sequence type="described" ref="VSP_058721"/>
    </isoform>
</comment>
<comment type="tissue specificity">
    <text evidence="1">Expressed strongly in round spermatids and fully mature spermatozoa. Expressed weakly in pachytene spermatocytes (at protein level). Isoform 2 is specifically expressed in the testis. Isoform 2 is expressed in pachytene spermatocytes and round spermatids. Isoform 3 is weakly expressed in testis.</text>
</comment>
<comment type="PTM">
    <text evidence="1">Constitutively phosphorylated on serine and threonine residues in acrosomal region of the sperm head, midpiece and flagellar regions of noncapacitated spermatozoa. Phosphorylation on tyrosine residues increases upon sperm capacitation within the acrosomal and tail regions in a protein kinase A (PKA)-dependent signaling pathway.</text>
</comment>
<comment type="disruption phenotype">
    <text evidence="1">Embryonically lethal before 10 dpc.</text>
</comment>
<comment type="sequence caution" evidence="3">
    <conflict type="erroneous initiation">
        <sequence resource="EMBL-CDS" id="DAA01465"/>
    </conflict>
    <text>Truncated N-terminus.</text>
</comment>
<keyword id="KW-0025">Alternative splicing</keyword>
<keyword id="KW-0966">Cell projection</keyword>
<keyword id="KW-0969">Cilium</keyword>
<keyword id="KW-0963">Cytoplasm</keyword>
<keyword id="KW-0968">Cytoplasmic vesicle</keyword>
<keyword id="KW-0221">Differentiation</keyword>
<keyword id="KW-0282">Flagellum</keyword>
<keyword id="KW-1185">Reference proteome</keyword>
<keyword id="KW-0677">Repeat</keyword>
<keyword id="KW-0744">Spermatogenesis</keyword>